<accession>A6Q639</accession>
<name>PYRE_NITSB</name>
<dbReference type="EC" id="2.4.2.10" evidence="1"/>
<dbReference type="EMBL" id="AP009178">
    <property type="protein sequence ID" value="BAF70948.1"/>
    <property type="molecule type" value="Genomic_DNA"/>
</dbReference>
<dbReference type="RefSeq" id="WP_012083211.1">
    <property type="nucleotide sequence ID" value="NC_009662.1"/>
</dbReference>
<dbReference type="SMR" id="A6Q639"/>
<dbReference type="STRING" id="387092.NIS_1844"/>
<dbReference type="KEGG" id="nis:NIS_1844"/>
<dbReference type="eggNOG" id="COG0461">
    <property type="taxonomic scope" value="Bacteria"/>
</dbReference>
<dbReference type="HOGENOM" id="CLU_074878_3_0_7"/>
<dbReference type="InParanoid" id="A6Q639"/>
<dbReference type="OrthoDB" id="9783570at2"/>
<dbReference type="UniPathway" id="UPA00070">
    <property type="reaction ID" value="UER00119"/>
</dbReference>
<dbReference type="Proteomes" id="UP000001118">
    <property type="component" value="Chromosome"/>
</dbReference>
<dbReference type="GO" id="GO:0000287">
    <property type="term" value="F:magnesium ion binding"/>
    <property type="evidence" value="ECO:0007669"/>
    <property type="project" value="UniProtKB-UniRule"/>
</dbReference>
<dbReference type="GO" id="GO:0004588">
    <property type="term" value="F:orotate phosphoribosyltransferase activity"/>
    <property type="evidence" value="ECO:0007669"/>
    <property type="project" value="UniProtKB-UniRule"/>
</dbReference>
<dbReference type="GO" id="GO:0044205">
    <property type="term" value="P:'de novo' UMP biosynthetic process"/>
    <property type="evidence" value="ECO:0007669"/>
    <property type="project" value="UniProtKB-UniRule"/>
</dbReference>
<dbReference type="GO" id="GO:0019856">
    <property type="term" value="P:pyrimidine nucleobase biosynthetic process"/>
    <property type="evidence" value="ECO:0007669"/>
    <property type="project" value="InterPro"/>
</dbReference>
<dbReference type="CDD" id="cd06223">
    <property type="entry name" value="PRTases_typeI"/>
    <property type="match status" value="1"/>
</dbReference>
<dbReference type="Gene3D" id="3.40.50.2020">
    <property type="match status" value="1"/>
</dbReference>
<dbReference type="HAMAP" id="MF_01208">
    <property type="entry name" value="PyrE"/>
    <property type="match status" value="1"/>
</dbReference>
<dbReference type="InterPro" id="IPR023031">
    <property type="entry name" value="OPRT"/>
</dbReference>
<dbReference type="InterPro" id="IPR006273">
    <property type="entry name" value="Orotate_PRibTrfase_bac"/>
</dbReference>
<dbReference type="InterPro" id="IPR000836">
    <property type="entry name" value="PRibTrfase_dom"/>
</dbReference>
<dbReference type="InterPro" id="IPR029057">
    <property type="entry name" value="PRTase-like"/>
</dbReference>
<dbReference type="NCBIfam" id="TIGR01367">
    <property type="entry name" value="pyrE_Therm"/>
    <property type="match status" value="1"/>
</dbReference>
<dbReference type="PANTHER" id="PTHR19278">
    <property type="entry name" value="OROTATE PHOSPHORIBOSYLTRANSFERASE"/>
    <property type="match status" value="1"/>
</dbReference>
<dbReference type="PANTHER" id="PTHR19278:SF9">
    <property type="entry name" value="URIDINE 5'-MONOPHOSPHATE SYNTHASE"/>
    <property type="match status" value="1"/>
</dbReference>
<dbReference type="Pfam" id="PF00156">
    <property type="entry name" value="Pribosyltran"/>
    <property type="match status" value="1"/>
</dbReference>
<dbReference type="SUPFAM" id="SSF53271">
    <property type="entry name" value="PRTase-like"/>
    <property type="match status" value="1"/>
</dbReference>
<dbReference type="PROSITE" id="PS00103">
    <property type="entry name" value="PUR_PYR_PR_TRANSFER"/>
    <property type="match status" value="1"/>
</dbReference>
<comment type="function">
    <text evidence="1">Catalyzes the transfer of a ribosyl phosphate group from 5-phosphoribose 1-diphosphate to orotate, leading to the formation of orotidine monophosphate (OMP).</text>
</comment>
<comment type="catalytic activity">
    <reaction evidence="1">
        <text>orotidine 5'-phosphate + diphosphate = orotate + 5-phospho-alpha-D-ribose 1-diphosphate</text>
        <dbReference type="Rhea" id="RHEA:10380"/>
        <dbReference type="ChEBI" id="CHEBI:30839"/>
        <dbReference type="ChEBI" id="CHEBI:33019"/>
        <dbReference type="ChEBI" id="CHEBI:57538"/>
        <dbReference type="ChEBI" id="CHEBI:58017"/>
        <dbReference type="EC" id="2.4.2.10"/>
    </reaction>
</comment>
<comment type="cofactor">
    <cofactor evidence="1">
        <name>Mg(2+)</name>
        <dbReference type="ChEBI" id="CHEBI:18420"/>
    </cofactor>
</comment>
<comment type="pathway">
    <text evidence="1">Pyrimidine metabolism; UMP biosynthesis via de novo pathway; UMP from orotate: step 1/2.</text>
</comment>
<comment type="subunit">
    <text evidence="1">Homodimer.</text>
</comment>
<comment type="similarity">
    <text evidence="1">Belongs to the purine/pyrimidine phosphoribosyltransferase family. PyrE subfamily.</text>
</comment>
<reference key="1">
    <citation type="journal article" date="2007" name="Proc. Natl. Acad. Sci. U.S.A.">
        <title>Deep-sea vent epsilon-proteobacterial genomes provide insights into emergence of pathogens.</title>
        <authorList>
            <person name="Nakagawa S."/>
            <person name="Takaki Y."/>
            <person name="Shimamura S."/>
            <person name="Reysenbach A.-L."/>
            <person name="Takai K."/>
            <person name="Horikoshi K."/>
        </authorList>
    </citation>
    <scope>NUCLEOTIDE SEQUENCE [LARGE SCALE GENOMIC DNA]</scope>
    <source>
        <strain>SB155-2</strain>
    </source>
</reference>
<keyword id="KW-0328">Glycosyltransferase</keyword>
<keyword id="KW-0460">Magnesium</keyword>
<keyword id="KW-0665">Pyrimidine biosynthesis</keyword>
<keyword id="KW-1185">Reference proteome</keyword>
<keyword id="KW-0808">Transferase</keyword>
<feature type="chain" id="PRO_1000066263" description="Orotate phosphoribosyltransferase">
    <location>
        <begin position="1"/>
        <end position="202"/>
    </location>
</feature>
<feature type="binding site" evidence="1">
    <location>
        <begin position="113"/>
        <end position="121"/>
    </location>
    <ligand>
        <name>5-phospho-alpha-D-ribose 1-diphosphate</name>
        <dbReference type="ChEBI" id="CHEBI:58017"/>
    </ligand>
</feature>
<feature type="binding site" evidence="1">
    <location>
        <position position="117"/>
    </location>
    <ligand>
        <name>orotate</name>
        <dbReference type="ChEBI" id="CHEBI:30839"/>
    </ligand>
</feature>
<feature type="binding site" evidence="1">
    <location>
        <position position="145"/>
    </location>
    <ligand>
        <name>orotate</name>
        <dbReference type="ChEBI" id="CHEBI:30839"/>
    </ligand>
</feature>
<gene>
    <name evidence="1" type="primary">pyrE</name>
    <name type="ordered locus">NIS_1844</name>
</gene>
<evidence type="ECO:0000255" key="1">
    <source>
        <dbReference type="HAMAP-Rule" id="MF_01208"/>
    </source>
</evidence>
<protein>
    <recommendedName>
        <fullName evidence="1">Orotate phosphoribosyltransferase</fullName>
        <shortName evidence="1">OPRT</shortName>
        <shortName evidence="1">OPRTase</shortName>
        <ecNumber evidence="1">2.4.2.10</ecNumber>
    </recommendedName>
</protein>
<organism>
    <name type="scientific">Nitratiruptor sp. (strain SB155-2)</name>
    <dbReference type="NCBI Taxonomy" id="387092"/>
    <lineage>
        <taxon>Bacteria</taxon>
        <taxon>Pseudomonadati</taxon>
        <taxon>Campylobacterota</taxon>
        <taxon>Epsilonproteobacteria</taxon>
        <taxon>Nautiliales</taxon>
        <taxon>Nitratiruptoraceae</taxon>
        <taxon>Nitratiruptor</taxon>
    </lineage>
</organism>
<sequence>MDIEKIYKESGALLKGHFLLSSGKHSPNYLQSAKVLEDPKKAELLAKELAKQIQAAGIEVDTVCSPAIGGLLAGYELARALGVRFIFTERKDGKMTLRRGFEVEPGEKVLICEDIITTGGSAMEAAKEMEKRGAEVVAFAALANRGVCQRTGSEIPSKSECKLPSNKTLFALADFTFPIYEPKECPMCAEGSEPIKPGSRGN</sequence>
<proteinExistence type="inferred from homology"/>